<sequence length="40" mass="4145">MAETTGRIPLWLIGTVTGIPVIGLVGIFFYGSYSGLGSSL</sequence>
<accession>Q2QD75</accession>
<accession>A5J1U8</accession>
<accession>Q4VZH8</accession>
<comment type="function">
    <text evidence="1">One of the components of the core complex of photosystem II (PSII). PSII is a light-driven water:plastoquinone oxidoreductase that uses light energy to abstract electrons from H(2)O, generating O(2) and a proton gradient subsequently used for ATP formation. It consists of a core antenna complex that captures photons, and an electron transfer chain that converts photonic excitation into a charge separation.</text>
</comment>
<comment type="subunit">
    <text evidence="1">PSII is composed of 1 copy each of membrane proteins PsbA, PsbB, PsbC, PsbD, PsbE, PsbF, PsbH, PsbI, PsbJ, PsbK, PsbL, PsbM, PsbT, PsbX, PsbY, PsbZ, Psb30/Ycf12, at least 3 peripheral proteins of the oxygen-evolving complex and a large number of cofactors. It forms dimeric complexes.</text>
</comment>
<comment type="subcellular location">
    <subcellularLocation>
        <location evidence="1">Plastid</location>
        <location evidence="1">Chloroplast thylakoid membrane</location>
        <topology evidence="1">Single-pass membrane protein</topology>
    </subcellularLocation>
</comment>
<comment type="similarity">
    <text evidence="1">Belongs to the PsbJ family.</text>
</comment>
<geneLocation type="chloroplast"/>
<proteinExistence type="inferred from homology"/>
<gene>
    <name evidence="1" type="primary">psbJ</name>
    <name type="ordered locus">CsCp054</name>
</gene>
<name>PSBJ_CUCSA</name>
<dbReference type="EMBL" id="DQ119058">
    <property type="protein sequence ID" value="AAZ94665.1"/>
    <property type="molecule type" value="Genomic_DNA"/>
</dbReference>
<dbReference type="EMBL" id="AJ970307">
    <property type="protein sequence ID" value="CAJ00772.1"/>
    <property type="molecule type" value="Genomic_DNA"/>
</dbReference>
<dbReference type="EMBL" id="DQ865975">
    <property type="protein sequence ID" value="ABI97431.1"/>
    <property type="molecule type" value="Genomic_DNA"/>
</dbReference>
<dbReference type="EMBL" id="DQ865976">
    <property type="protein sequence ID" value="ABI98759.1"/>
    <property type="molecule type" value="Genomic_DNA"/>
</dbReference>
<dbReference type="RefSeq" id="YP_247613.1">
    <property type="nucleotide sequence ID" value="NC_007144.1"/>
</dbReference>
<dbReference type="SMR" id="Q2QD75"/>
<dbReference type="GeneID" id="3429283"/>
<dbReference type="KEGG" id="csv:3429283"/>
<dbReference type="GO" id="GO:0009535">
    <property type="term" value="C:chloroplast thylakoid membrane"/>
    <property type="evidence" value="ECO:0007669"/>
    <property type="project" value="UniProtKB-SubCell"/>
</dbReference>
<dbReference type="GO" id="GO:0009539">
    <property type="term" value="C:photosystem II reaction center"/>
    <property type="evidence" value="ECO:0007669"/>
    <property type="project" value="InterPro"/>
</dbReference>
<dbReference type="GO" id="GO:0015979">
    <property type="term" value="P:photosynthesis"/>
    <property type="evidence" value="ECO:0007669"/>
    <property type="project" value="UniProtKB-UniRule"/>
</dbReference>
<dbReference type="Gene3D" id="6.10.250.2070">
    <property type="match status" value="1"/>
</dbReference>
<dbReference type="HAMAP" id="MF_01305">
    <property type="entry name" value="PSII_PsbJ"/>
    <property type="match status" value="1"/>
</dbReference>
<dbReference type="InterPro" id="IPR002682">
    <property type="entry name" value="PSII_PsbJ"/>
</dbReference>
<dbReference type="InterPro" id="IPR037267">
    <property type="entry name" value="PSII_PsbJ_sf"/>
</dbReference>
<dbReference type="NCBIfam" id="NF002722">
    <property type="entry name" value="PRK02565.1"/>
    <property type="match status" value="1"/>
</dbReference>
<dbReference type="PANTHER" id="PTHR34812">
    <property type="entry name" value="PHOTOSYSTEM II REACTION CENTER PROTEIN J"/>
    <property type="match status" value="1"/>
</dbReference>
<dbReference type="PANTHER" id="PTHR34812:SF3">
    <property type="entry name" value="PHOTOSYSTEM II REACTION CENTER PROTEIN J"/>
    <property type="match status" value="1"/>
</dbReference>
<dbReference type="Pfam" id="PF01788">
    <property type="entry name" value="PsbJ"/>
    <property type="match status" value="1"/>
</dbReference>
<dbReference type="SUPFAM" id="SSF161021">
    <property type="entry name" value="Photosystem II reaction center protein J, PsbJ"/>
    <property type="match status" value="1"/>
</dbReference>
<keyword id="KW-0150">Chloroplast</keyword>
<keyword id="KW-0472">Membrane</keyword>
<keyword id="KW-0602">Photosynthesis</keyword>
<keyword id="KW-0604">Photosystem II</keyword>
<keyword id="KW-0934">Plastid</keyword>
<keyword id="KW-0674">Reaction center</keyword>
<keyword id="KW-0793">Thylakoid</keyword>
<keyword id="KW-0812">Transmembrane</keyword>
<keyword id="KW-1133">Transmembrane helix</keyword>
<evidence type="ECO:0000255" key="1">
    <source>
        <dbReference type="HAMAP-Rule" id="MF_01305"/>
    </source>
</evidence>
<evidence type="ECO:0000305" key="2"/>
<organism>
    <name type="scientific">Cucumis sativus</name>
    <name type="common">Cucumber</name>
    <dbReference type="NCBI Taxonomy" id="3659"/>
    <lineage>
        <taxon>Eukaryota</taxon>
        <taxon>Viridiplantae</taxon>
        <taxon>Streptophyta</taxon>
        <taxon>Embryophyta</taxon>
        <taxon>Tracheophyta</taxon>
        <taxon>Spermatophyta</taxon>
        <taxon>Magnoliopsida</taxon>
        <taxon>eudicotyledons</taxon>
        <taxon>Gunneridae</taxon>
        <taxon>Pentapetalae</taxon>
        <taxon>rosids</taxon>
        <taxon>fabids</taxon>
        <taxon>Cucurbitales</taxon>
        <taxon>Cucurbitaceae</taxon>
        <taxon>Benincaseae</taxon>
        <taxon>Cucumis</taxon>
    </lineage>
</organism>
<feature type="chain" id="PRO_0000276091" description="Photosystem II reaction center protein J">
    <location>
        <begin position="1"/>
        <end position="40"/>
    </location>
</feature>
<feature type="transmembrane region" description="Helical" evidence="1">
    <location>
        <begin position="8"/>
        <end position="28"/>
    </location>
</feature>
<feature type="sequence conflict" description="In Ref. 2; CAJ00772." evidence="2" ref="2">
    <original>I</original>
    <variation>V</variation>
    <location>
        <position position="27"/>
    </location>
</feature>
<protein>
    <recommendedName>
        <fullName evidence="1">Photosystem II reaction center protein J</fullName>
        <shortName evidence="1">PSII-J</shortName>
    </recommendedName>
</protein>
<reference key="1">
    <citation type="journal article" date="2006" name="Plant Cell Rep.">
        <title>Complete sequence and organization of the cucumber (Cucumis sativus L. cv. Baekmibaekdadagi) chloroplast genome.</title>
        <authorList>
            <person name="Kim J.-S."/>
            <person name="Jung J.D."/>
            <person name="Lee J.-A."/>
            <person name="Park H.-W."/>
            <person name="Oh K.-H."/>
            <person name="Jeong W.J."/>
            <person name="Choi D.-W."/>
            <person name="Liu J.R."/>
            <person name="Cho K.Y."/>
        </authorList>
    </citation>
    <scope>NUCLEOTIDE SEQUENCE [LARGE SCALE GENOMIC DNA]</scope>
    <source>
        <strain>cv. Baekmibaekdadagi</strain>
    </source>
</reference>
<reference key="2">
    <citation type="journal article" date="2007" name="Cell. Mol. Biol. Lett.">
        <title>The complete structure of the cucumber (Cucumis sativus L.) chloroplast genome: its composition and comparative analysis.</title>
        <authorList>
            <person name="Plader W.W."/>
            <person name="Yukawa Y."/>
            <person name="Sugiura M."/>
            <person name="Malepszy S."/>
        </authorList>
    </citation>
    <scope>NUCLEOTIDE SEQUENCE [LARGE SCALE GENOMIC DNA]</scope>
    <source>
        <strain>cv. Borszczagowski</strain>
    </source>
</reference>
<reference key="3">
    <citation type="journal article" date="2007" name="Genome">
        <title>Sequencing cucumber (Cucumis sativus L.) chloroplast genomes identifies differences between chilling-tolerant and -susceptible cucumber lines.</title>
        <authorList>
            <person name="Chung S.-M."/>
            <person name="Gordon V.S."/>
            <person name="Staub J.E."/>
        </authorList>
    </citation>
    <scope>NUCLEOTIDE SEQUENCE [LARGE SCALE GENOMIC DNA]</scope>
    <source>
        <strain>cv. Chipper</strain>
        <strain>cv. Gy14</strain>
    </source>
</reference>